<name>BFR2_DEBHA</name>
<reference key="1">
    <citation type="journal article" date="2004" name="Nature">
        <title>Genome evolution in yeasts.</title>
        <authorList>
            <person name="Dujon B."/>
            <person name="Sherman D."/>
            <person name="Fischer G."/>
            <person name="Durrens P."/>
            <person name="Casaregola S."/>
            <person name="Lafontaine I."/>
            <person name="de Montigny J."/>
            <person name="Marck C."/>
            <person name="Neuveglise C."/>
            <person name="Talla E."/>
            <person name="Goffard N."/>
            <person name="Frangeul L."/>
            <person name="Aigle M."/>
            <person name="Anthouard V."/>
            <person name="Babour A."/>
            <person name="Barbe V."/>
            <person name="Barnay S."/>
            <person name="Blanchin S."/>
            <person name="Beckerich J.-M."/>
            <person name="Beyne E."/>
            <person name="Bleykasten C."/>
            <person name="Boisrame A."/>
            <person name="Boyer J."/>
            <person name="Cattolico L."/>
            <person name="Confanioleri F."/>
            <person name="de Daruvar A."/>
            <person name="Despons L."/>
            <person name="Fabre E."/>
            <person name="Fairhead C."/>
            <person name="Ferry-Dumazet H."/>
            <person name="Groppi A."/>
            <person name="Hantraye F."/>
            <person name="Hennequin C."/>
            <person name="Jauniaux N."/>
            <person name="Joyet P."/>
            <person name="Kachouri R."/>
            <person name="Kerrest A."/>
            <person name="Koszul R."/>
            <person name="Lemaire M."/>
            <person name="Lesur I."/>
            <person name="Ma L."/>
            <person name="Muller H."/>
            <person name="Nicaud J.-M."/>
            <person name="Nikolski M."/>
            <person name="Oztas S."/>
            <person name="Ozier-Kalogeropoulos O."/>
            <person name="Pellenz S."/>
            <person name="Potier S."/>
            <person name="Richard G.-F."/>
            <person name="Straub M.-L."/>
            <person name="Suleau A."/>
            <person name="Swennen D."/>
            <person name="Tekaia F."/>
            <person name="Wesolowski-Louvel M."/>
            <person name="Westhof E."/>
            <person name="Wirth B."/>
            <person name="Zeniou-Meyer M."/>
            <person name="Zivanovic Y."/>
            <person name="Bolotin-Fukuhara M."/>
            <person name="Thierry A."/>
            <person name="Bouchier C."/>
            <person name="Caudron B."/>
            <person name="Scarpelli C."/>
            <person name="Gaillardin C."/>
            <person name="Weissenbach J."/>
            <person name="Wincker P."/>
            <person name="Souciet J.-L."/>
        </authorList>
    </citation>
    <scope>NUCLEOTIDE SEQUENCE [LARGE SCALE GENOMIC DNA]</scope>
    <source>
        <strain>ATCC 36239 / CBS 767 / BCRC 21394 / JCM 1990 / NBRC 0083 / IGC 2968</strain>
    </source>
</reference>
<feature type="chain" id="PRO_0000056626" description="Protein BFR2">
    <location>
        <begin position="1"/>
        <end position="514"/>
    </location>
</feature>
<feature type="region of interest" description="Disordered" evidence="2">
    <location>
        <begin position="14"/>
        <end position="153"/>
    </location>
</feature>
<feature type="region of interest" description="Disordered" evidence="2">
    <location>
        <begin position="353"/>
        <end position="382"/>
    </location>
</feature>
<feature type="compositionally biased region" description="Basic and acidic residues" evidence="2">
    <location>
        <begin position="25"/>
        <end position="42"/>
    </location>
</feature>
<feature type="compositionally biased region" description="Acidic residues" evidence="2">
    <location>
        <begin position="118"/>
        <end position="134"/>
    </location>
</feature>
<feature type="compositionally biased region" description="Basic and acidic residues" evidence="2">
    <location>
        <begin position="135"/>
        <end position="144"/>
    </location>
</feature>
<feature type="compositionally biased region" description="Polar residues" evidence="2">
    <location>
        <begin position="354"/>
        <end position="378"/>
    </location>
</feature>
<protein>
    <recommendedName>
        <fullName>Protein BFR2</fullName>
    </recommendedName>
</protein>
<sequence>MGNKSLAEKIAELSKPSTEFDIEDNDLRDNVFDHNGDDDHSNSDSSDDETLKKQHYLAVDKSNIRNENGNLNLGKAYGGKVTSRGDLYESDEESRSLDEHENSEDSDSGISLKTNSESESEDDDEDESESEDKDEVTKEEDSNLTHKRSKLKELMSNERQHIVNRLSQSASNDAVKGFAILQQHKLFDSIIDSRMKVQKSLTNSNVLPIKRDILKGHFATKKTDKYLNQTSEKCFDLLDSILALRSKLLKKDSVLSSSESPKSFNPKKRTLTDYLEATGKQDTVLERYRSSVLSKWSSKIHNAAGSTAISSGKFKAINQSAEQQVINNLSDMDRLIKRTKLNRRQVKPLGYEYHTSQSDITEQGSIDDQNQDIPNENKQTNKSDLSELASIFDDEDFYRVLLNDLVDKKIQSSDPASGLTVSLRSVQQAQKFKKNIDTKASKGRKLRYHIQEQIANFEAPRGGWKWDDNQIDEFFASLLGQKVNMNEVDEDEDHNNDDDEEIVINSNDSFKLFG</sequence>
<proteinExistence type="inferred from homology"/>
<accession>Q6BXX1</accession>
<gene>
    <name type="primary">BFR2</name>
    <name type="ordered locus">DEHA2A14212g</name>
</gene>
<evidence type="ECO:0000250" key="1"/>
<evidence type="ECO:0000256" key="2">
    <source>
        <dbReference type="SAM" id="MobiDB-lite"/>
    </source>
</evidence>
<evidence type="ECO:0000305" key="3"/>
<organism>
    <name type="scientific">Debaryomyces hansenii (strain ATCC 36239 / CBS 767 / BCRC 21394 / JCM 1990 / NBRC 0083 / IGC 2968)</name>
    <name type="common">Yeast</name>
    <name type="synonym">Torulaspora hansenii</name>
    <dbReference type="NCBI Taxonomy" id="284592"/>
    <lineage>
        <taxon>Eukaryota</taxon>
        <taxon>Fungi</taxon>
        <taxon>Dikarya</taxon>
        <taxon>Ascomycota</taxon>
        <taxon>Saccharomycotina</taxon>
        <taxon>Pichiomycetes</taxon>
        <taxon>Debaryomycetaceae</taxon>
        <taxon>Debaryomyces</taxon>
    </lineage>
</organism>
<comment type="subcellular location">
    <subcellularLocation>
        <location evidence="1">Nucleus</location>
        <location evidence="1">Nucleolus</location>
    </subcellularLocation>
</comment>
<comment type="similarity">
    <text evidence="3">Belongs to the AATF family.</text>
</comment>
<keyword id="KW-0539">Nucleus</keyword>
<keyword id="KW-1185">Reference proteome</keyword>
<dbReference type="EMBL" id="CR382133">
    <property type="protein sequence ID" value="CAG84926.2"/>
    <property type="molecule type" value="Genomic_DNA"/>
</dbReference>
<dbReference type="RefSeq" id="XP_456948.2">
    <property type="nucleotide sequence ID" value="XM_456948.1"/>
</dbReference>
<dbReference type="SMR" id="Q6BXX1"/>
<dbReference type="FunCoup" id="Q6BXX1">
    <property type="interactions" value="994"/>
</dbReference>
<dbReference type="STRING" id="284592.Q6BXX1"/>
<dbReference type="GeneID" id="2899399"/>
<dbReference type="KEGG" id="dha:DEHA2A14212g"/>
<dbReference type="VEuPathDB" id="FungiDB:DEHA2A14212g"/>
<dbReference type="eggNOG" id="KOG2773">
    <property type="taxonomic scope" value="Eukaryota"/>
</dbReference>
<dbReference type="HOGENOM" id="CLU_018299_2_2_1"/>
<dbReference type="InParanoid" id="Q6BXX1"/>
<dbReference type="OMA" id="INFMAPN"/>
<dbReference type="OrthoDB" id="5783963at2759"/>
<dbReference type="Proteomes" id="UP000000599">
    <property type="component" value="Chromosome A"/>
</dbReference>
<dbReference type="GO" id="GO:0005730">
    <property type="term" value="C:nucleolus"/>
    <property type="evidence" value="ECO:0007669"/>
    <property type="project" value="UniProtKB-SubCell"/>
</dbReference>
<dbReference type="GO" id="GO:0032040">
    <property type="term" value="C:small-subunit processome"/>
    <property type="evidence" value="ECO:0007669"/>
    <property type="project" value="EnsemblFungi"/>
</dbReference>
<dbReference type="GO" id="GO:0000462">
    <property type="term" value="P:maturation of SSU-rRNA from tricistronic rRNA transcript (SSU-rRNA, 5.8S rRNA, LSU-rRNA)"/>
    <property type="evidence" value="ECO:0007669"/>
    <property type="project" value="EnsemblFungi"/>
</dbReference>
<dbReference type="InterPro" id="IPR025160">
    <property type="entry name" value="AATF"/>
</dbReference>
<dbReference type="InterPro" id="IPR039223">
    <property type="entry name" value="AATF/Bfr2"/>
</dbReference>
<dbReference type="InterPro" id="IPR012617">
    <property type="entry name" value="AATF_C"/>
</dbReference>
<dbReference type="PANTHER" id="PTHR15565">
    <property type="entry name" value="AATF PROTEIN APOPTOSIS ANTAGONIZING TRANSCRIPTION FACTOR"/>
    <property type="match status" value="1"/>
</dbReference>
<dbReference type="PANTHER" id="PTHR15565:SF0">
    <property type="entry name" value="PROTEIN AATF"/>
    <property type="match status" value="1"/>
</dbReference>
<dbReference type="Pfam" id="PF13339">
    <property type="entry name" value="AATF-Che1"/>
    <property type="match status" value="1"/>
</dbReference>
<dbReference type="Pfam" id="PF08164">
    <property type="entry name" value="TRAUB"/>
    <property type="match status" value="1"/>
</dbReference>